<protein>
    <recommendedName>
        <fullName>Cytochrome b</fullName>
    </recommendedName>
    <alternativeName>
        <fullName>Complex III subunit 3</fullName>
    </alternativeName>
    <alternativeName>
        <fullName>Complex III subunit III</fullName>
    </alternativeName>
    <alternativeName>
        <fullName>Cytochrome b-c1 complex subunit 3</fullName>
    </alternativeName>
    <alternativeName>
        <fullName>Ubiquinol-cytochrome-c reductase complex cytochrome b subunit</fullName>
    </alternativeName>
</protein>
<dbReference type="EMBL" id="AF302165">
    <property type="protein sequence ID" value="AAL69578.1"/>
    <property type="molecule type" value="Genomic_DNA"/>
</dbReference>
<dbReference type="SMR" id="Q8WDV6"/>
<dbReference type="GO" id="GO:0005743">
    <property type="term" value="C:mitochondrial inner membrane"/>
    <property type="evidence" value="ECO:0007669"/>
    <property type="project" value="UniProtKB-SubCell"/>
</dbReference>
<dbReference type="GO" id="GO:0045275">
    <property type="term" value="C:respiratory chain complex III"/>
    <property type="evidence" value="ECO:0007669"/>
    <property type="project" value="InterPro"/>
</dbReference>
<dbReference type="GO" id="GO:0046872">
    <property type="term" value="F:metal ion binding"/>
    <property type="evidence" value="ECO:0007669"/>
    <property type="project" value="UniProtKB-KW"/>
</dbReference>
<dbReference type="GO" id="GO:0008121">
    <property type="term" value="F:ubiquinol-cytochrome-c reductase activity"/>
    <property type="evidence" value="ECO:0007669"/>
    <property type="project" value="InterPro"/>
</dbReference>
<dbReference type="GO" id="GO:0006122">
    <property type="term" value="P:mitochondrial electron transport, ubiquinol to cytochrome c"/>
    <property type="evidence" value="ECO:0007669"/>
    <property type="project" value="TreeGrafter"/>
</dbReference>
<dbReference type="CDD" id="cd00290">
    <property type="entry name" value="cytochrome_b_C"/>
    <property type="match status" value="1"/>
</dbReference>
<dbReference type="CDD" id="cd00284">
    <property type="entry name" value="Cytochrome_b_N"/>
    <property type="match status" value="1"/>
</dbReference>
<dbReference type="FunFam" id="1.20.810.10:FF:000002">
    <property type="entry name" value="Cytochrome b"/>
    <property type="match status" value="1"/>
</dbReference>
<dbReference type="Gene3D" id="1.20.810.10">
    <property type="entry name" value="Cytochrome Bc1 Complex, Chain C"/>
    <property type="match status" value="1"/>
</dbReference>
<dbReference type="InterPro" id="IPR005798">
    <property type="entry name" value="Cyt_b/b6_C"/>
</dbReference>
<dbReference type="InterPro" id="IPR036150">
    <property type="entry name" value="Cyt_b/b6_C_sf"/>
</dbReference>
<dbReference type="InterPro" id="IPR005797">
    <property type="entry name" value="Cyt_b/b6_N"/>
</dbReference>
<dbReference type="InterPro" id="IPR027387">
    <property type="entry name" value="Cytb/b6-like_sf"/>
</dbReference>
<dbReference type="InterPro" id="IPR030689">
    <property type="entry name" value="Cytochrome_b"/>
</dbReference>
<dbReference type="InterPro" id="IPR048260">
    <property type="entry name" value="Cytochrome_b_C_euk/bac"/>
</dbReference>
<dbReference type="InterPro" id="IPR048259">
    <property type="entry name" value="Cytochrome_b_N_euk/bac"/>
</dbReference>
<dbReference type="InterPro" id="IPR016174">
    <property type="entry name" value="Di-haem_cyt_TM"/>
</dbReference>
<dbReference type="PANTHER" id="PTHR19271">
    <property type="entry name" value="CYTOCHROME B"/>
    <property type="match status" value="1"/>
</dbReference>
<dbReference type="PANTHER" id="PTHR19271:SF16">
    <property type="entry name" value="CYTOCHROME B"/>
    <property type="match status" value="1"/>
</dbReference>
<dbReference type="Pfam" id="PF00032">
    <property type="entry name" value="Cytochrom_B_C"/>
    <property type="match status" value="1"/>
</dbReference>
<dbReference type="Pfam" id="PF00033">
    <property type="entry name" value="Cytochrome_B"/>
    <property type="match status" value="1"/>
</dbReference>
<dbReference type="PIRSF" id="PIRSF038885">
    <property type="entry name" value="COB"/>
    <property type="match status" value="1"/>
</dbReference>
<dbReference type="SUPFAM" id="SSF81648">
    <property type="entry name" value="a domain/subunit of cytochrome bc1 complex (Ubiquinol-cytochrome c reductase)"/>
    <property type="match status" value="1"/>
</dbReference>
<dbReference type="SUPFAM" id="SSF81342">
    <property type="entry name" value="Transmembrane di-heme cytochromes"/>
    <property type="match status" value="1"/>
</dbReference>
<dbReference type="PROSITE" id="PS51003">
    <property type="entry name" value="CYTB_CTER"/>
    <property type="match status" value="1"/>
</dbReference>
<dbReference type="PROSITE" id="PS51002">
    <property type="entry name" value="CYTB_NTER"/>
    <property type="match status" value="1"/>
</dbReference>
<gene>
    <name type="primary">MT-CYB</name>
    <name type="synonym">COB</name>
    <name type="synonym">CYTB</name>
    <name type="synonym">MTCYB</name>
</gene>
<evidence type="ECO:0000250" key="1"/>
<evidence type="ECO:0000250" key="2">
    <source>
        <dbReference type="UniProtKB" id="P00157"/>
    </source>
</evidence>
<evidence type="ECO:0000255" key="3">
    <source>
        <dbReference type="PROSITE-ProRule" id="PRU00967"/>
    </source>
</evidence>
<evidence type="ECO:0000255" key="4">
    <source>
        <dbReference type="PROSITE-ProRule" id="PRU00968"/>
    </source>
</evidence>
<comment type="function">
    <text evidence="2">Component of the ubiquinol-cytochrome c reductase complex (complex III or cytochrome b-c1 complex) that is part of the mitochondrial respiratory chain. The b-c1 complex mediates electron transfer from ubiquinol to cytochrome c. Contributes to the generation of a proton gradient across the mitochondrial membrane that is then used for ATP synthesis.</text>
</comment>
<comment type="cofactor">
    <cofactor evidence="2">
        <name>heme b</name>
        <dbReference type="ChEBI" id="CHEBI:60344"/>
    </cofactor>
    <text evidence="2">Binds 2 heme b groups non-covalently.</text>
</comment>
<comment type="subunit">
    <text evidence="2">The cytochrome bc1 complex contains 11 subunits: 3 respiratory subunits (MT-CYB, CYC1 and UQCRFS1), 2 core proteins (UQCRC1 and UQCRC2) and 6 low-molecular weight proteins (UQCRH/QCR6, UQCRB/QCR7, UQCRQ/QCR8, UQCR10/QCR9, UQCR11/QCR10 and a cleavage product of UQCRFS1). This cytochrome bc1 complex then forms a dimer.</text>
</comment>
<comment type="subcellular location">
    <subcellularLocation>
        <location evidence="2">Mitochondrion inner membrane</location>
        <topology evidence="2">Multi-pass membrane protein</topology>
    </subcellularLocation>
</comment>
<comment type="miscellaneous">
    <text evidence="1">Heme 1 (or BL or b562) is low-potential and absorbs at about 562 nm, and heme 2 (or BH or b566) is high-potential and absorbs at about 566 nm.</text>
</comment>
<comment type="similarity">
    <text evidence="3 4">Belongs to the cytochrome b family.</text>
</comment>
<comment type="caution">
    <text evidence="2">The full-length protein contains only eight transmembrane helices, not nine as predicted by bioinformatics tools.</text>
</comment>
<proteinExistence type="inferred from homology"/>
<reference key="1">
    <citation type="journal article" date="2002" name="Mol. Phylogenet. Evol.">
        <title>Systematics and phylogeography of pocket gophers in the genera Cratogeomys and Pappogeomys.</title>
        <authorList>
            <person name="Demastes J.W."/>
            <person name="Spradling T.A."/>
            <person name="Hafner M.S."/>
            <person name="Hafner D.J."/>
            <person name="Reed D.L."/>
        </authorList>
    </citation>
    <scope>NUCLEOTIDE SEQUENCE [GENOMIC DNA]</scope>
    <source>
        <strain>Isolate G13</strain>
    </source>
</reference>
<feature type="chain" id="PRO_0000060816" description="Cytochrome b">
    <location>
        <begin position="1"/>
        <end position="379"/>
    </location>
</feature>
<feature type="transmembrane region" description="Helical" evidence="2">
    <location>
        <begin position="33"/>
        <end position="53"/>
    </location>
</feature>
<feature type="transmembrane region" description="Helical" evidence="2">
    <location>
        <begin position="77"/>
        <end position="98"/>
    </location>
</feature>
<feature type="transmembrane region" description="Helical" evidence="2">
    <location>
        <begin position="113"/>
        <end position="133"/>
    </location>
</feature>
<feature type="transmembrane region" description="Helical" evidence="2">
    <location>
        <begin position="178"/>
        <end position="198"/>
    </location>
</feature>
<feature type="transmembrane region" description="Helical" evidence="2">
    <location>
        <begin position="226"/>
        <end position="246"/>
    </location>
</feature>
<feature type="transmembrane region" description="Helical" evidence="2">
    <location>
        <begin position="288"/>
        <end position="308"/>
    </location>
</feature>
<feature type="transmembrane region" description="Helical" evidence="2">
    <location>
        <begin position="320"/>
        <end position="340"/>
    </location>
</feature>
<feature type="transmembrane region" description="Helical" evidence="2">
    <location>
        <begin position="347"/>
        <end position="367"/>
    </location>
</feature>
<feature type="binding site" description="axial binding residue" evidence="2">
    <location>
        <position position="83"/>
    </location>
    <ligand>
        <name>heme b</name>
        <dbReference type="ChEBI" id="CHEBI:60344"/>
        <label>b562</label>
    </ligand>
    <ligandPart>
        <name>Fe</name>
        <dbReference type="ChEBI" id="CHEBI:18248"/>
    </ligandPart>
</feature>
<feature type="binding site" description="axial binding residue" evidence="2">
    <location>
        <position position="97"/>
    </location>
    <ligand>
        <name>heme b</name>
        <dbReference type="ChEBI" id="CHEBI:60344"/>
        <label>b566</label>
    </ligand>
    <ligandPart>
        <name>Fe</name>
        <dbReference type="ChEBI" id="CHEBI:18248"/>
    </ligandPart>
</feature>
<feature type="binding site" description="axial binding residue" evidence="2">
    <location>
        <position position="182"/>
    </location>
    <ligand>
        <name>heme b</name>
        <dbReference type="ChEBI" id="CHEBI:60344"/>
        <label>b562</label>
    </ligand>
    <ligandPart>
        <name>Fe</name>
        <dbReference type="ChEBI" id="CHEBI:18248"/>
    </ligandPart>
</feature>
<feature type="binding site" description="axial binding residue" evidence="2">
    <location>
        <position position="196"/>
    </location>
    <ligand>
        <name>heme b</name>
        <dbReference type="ChEBI" id="CHEBI:60344"/>
        <label>b566</label>
    </ligand>
    <ligandPart>
        <name>Fe</name>
        <dbReference type="ChEBI" id="CHEBI:18248"/>
    </ligandPart>
</feature>
<feature type="binding site" evidence="2">
    <location>
        <position position="201"/>
    </location>
    <ligand>
        <name>a ubiquinone</name>
        <dbReference type="ChEBI" id="CHEBI:16389"/>
    </ligand>
</feature>
<name>CYB_CRAFU</name>
<keyword id="KW-0249">Electron transport</keyword>
<keyword id="KW-0349">Heme</keyword>
<keyword id="KW-0408">Iron</keyword>
<keyword id="KW-0472">Membrane</keyword>
<keyword id="KW-0479">Metal-binding</keyword>
<keyword id="KW-0496">Mitochondrion</keyword>
<keyword id="KW-0999">Mitochondrion inner membrane</keyword>
<keyword id="KW-0679">Respiratory chain</keyword>
<keyword id="KW-0812">Transmembrane</keyword>
<keyword id="KW-1133">Transmembrane helix</keyword>
<keyword id="KW-0813">Transport</keyword>
<keyword id="KW-0830">Ubiquinone</keyword>
<sequence length="379" mass="42833">MTIMRKSHPVMKIVNHAFIDLPTPPNISGWWNFGSLLGLCLILQILTGLFLAMHYTSDTLTAFSSVTHICRDVNYGWLIRYMHANGASLFFICLYIHIGRGIYYGSYLYKETWNIGILLLFLTMATAFVGYVLPWGQMSFWGATVITNLLSAIPYIGQDLVEWIWGGFSVDKATLTRFFAFHFILPFIITALAMVHLLFLHETGSNNPLGIPSDCGKVPFHPYYTTKDFLGAVLLLTLFMTLVLFFPDKLGDPDNYSPANPLNTPPHIKPEWYFLFAYAILRSIPNKLGGVCALVFSILVLALLPYLHTSKQRSLSFRPLSQTLFWALVSDLIILTWIGGQPVEPPYIIIGQVASILYFSIILIFMPIAGLIENKMLKW</sequence>
<organism>
    <name type="scientific">Cratogeomys fumosus</name>
    <name type="common">Smoky pocket gopher</name>
    <name type="synonym">Pappogeomys fumosus</name>
    <dbReference type="NCBI Taxonomy" id="13458"/>
    <lineage>
        <taxon>Eukaryota</taxon>
        <taxon>Metazoa</taxon>
        <taxon>Chordata</taxon>
        <taxon>Craniata</taxon>
        <taxon>Vertebrata</taxon>
        <taxon>Euteleostomi</taxon>
        <taxon>Mammalia</taxon>
        <taxon>Eutheria</taxon>
        <taxon>Euarchontoglires</taxon>
        <taxon>Glires</taxon>
        <taxon>Rodentia</taxon>
        <taxon>Castorimorpha</taxon>
        <taxon>Geomyidae</taxon>
        <taxon>Cratogeomys</taxon>
    </lineage>
</organism>
<geneLocation type="mitochondrion"/>
<accession>Q8WDV6</accession>